<organism>
    <name type="scientific">Schizosaccharomyces pombe (strain 972 / ATCC 24843)</name>
    <name type="common">Fission yeast</name>
    <dbReference type="NCBI Taxonomy" id="284812"/>
    <lineage>
        <taxon>Eukaryota</taxon>
        <taxon>Fungi</taxon>
        <taxon>Dikarya</taxon>
        <taxon>Ascomycota</taxon>
        <taxon>Taphrinomycotina</taxon>
        <taxon>Schizosaccharomycetes</taxon>
        <taxon>Schizosaccharomycetales</taxon>
        <taxon>Schizosaccharomycetaceae</taxon>
        <taxon>Schizosaccharomyces</taxon>
    </lineage>
</organism>
<feature type="chain" id="PRO_0000238528" description="mRNA 3'-end-processing protein rna14">
    <location>
        <begin position="1"/>
        <end position="733"/>
    </location>
</feature>
<feature type="repeat" description="HAT 1">
    <location>
        <begin position="85"/>
        <end position="117"/>
    </location>
</feature>
<feature type="repeat" description="HAT 2">
    <location>
        <begin position="119"/>
        <end position="150"/>
    </location>
</feature>
<feature type="repeat" description="HAT 3">
    <location>
        <begin position="158"/>
        <end position="193"/>
    </location>
</feature>
<feature type="repeat" description="HAT 4">
    <location>
        <begin position="204"/>
        <end position="237"/>
    </location>
</feature>
<feature type="repeat" description="HAT 5">
    <location>
        <begin position="269"/>
        <end position="302"/>
    </location>
</feature>
<feature type="repeat" description="HAT 6">
    <location>
        <begin position="312"/>
        <end position="344"/>
    </location>
</feature>
<feature type="repeat" description="HAT 7">
    <location>
        <begin position="523"/>
        <end position="557"/>
    </location>
</feature>
<feature type="region of interest" description="Disordered" evidence="2">
    <location>
        <begin position="1"/>
        <end position="45"/>
    </location>
</feature>
<feature type="region of interest" description="Disordered" evidence="2">
    <location>
        <begin position="404"/>
        <end position="425"/>
    </location>
</feature>
<feature type="compositionally biased region" description="Polar residues" evidence="2">
    <location>
        <begin position="27"/>
        <end position="45"/>
    </location>
</feature>
<feature type="compositionally biased region" description="Low complexity" evidence="2">
    <location>
        <begin position="404"/>
        <end position="414"/>
    </location>
</feature>
<name>RNA14_SCHPO</name>
<comment type="function">
    <text evidence="1">Component of the cleavage factor IA (CFIA) complex, which is involved in the endonucleolytic cleavage during polyadenylation-dependent pre-mRNA 3'-end formation.</text>
</comment>
<comment type="subcellular location">
    <subcellularLocation>
        <location evidence="1">Nucleus</location>
    </subcellularLocation>
    <subcellularLocation>
        <location evidence="1">Cytoplasm</location>
    </subcellularLocation>
    <text evidence="1">Nucleus and/or cytoplasm.</text>
</comment>
<keyword id="KW-0963">Cytoplasm</keyword>
<keyword id="KW-0507">mRNA processing</keyword>
<keyword id="KW-0539">Nucleus</keyword>
<keyword id="KW-1185">Reference proteome</keyword>
<keyword id="KW-0677">Repeat</keyword>
<proteinExistence type="inferred from homology"/>
<accession>O14233</accession>
<reference key="1">
    <citation type="journal article" date="2002" name="Nature">
        <title>The genome sequence of Schizosaccharomyces pombe.</title>
        <authorList>
            <person name="Wood V."/>
            <person name="Gwilliam R."/>
            <person name="Rajandream M.A."/>
            <person name="Lyne M.H."/>
            <person name="Lyne R."/>
            <person name="Stewart A."/>
            <person name="Sgouros J.G."/>
            <person name="Peat N."/>
            <person name="Hayles J."/>
            <person name="Baker S.G."/>
            <person name="Basham D."/>
            <person name="Bowman S."/>
            <person name="Brooks K."/>
            <person name="Brown D."/>
            <person name="Brown S."/>
            <person name="Chillingworth T."/>
            <person name="Churcher C.M."/>
            <person name="Collins M."/>
            <person name="Connor R."/>
            <person name="Cronin A."/>
            <person name="Davis P."/>
            <person name="Feltwell T."/>
            <person name="Fraser A."/>
            <person name="Gentles S."/>
            <person name="Goble A."/>
            <person name="Hamlin N."/>
            <person name="Harris D.E."/>
            <person name="Hidalgo J."/>
            <person name="Hodgson G."/>
            <person name="Holroyd S."/>
            <person name="Hornsby T."/>
            <person name="Howarth S."/>
            <person name="Huckle E.J."/>
            <person name="Hunt S."/>
            <person name="Jagels K."/>
            <person name="James K.D."/>
            <person name="Jones L."/>
            <person name="Jones M."/>
            <person name="Leather S."/>
            <person name="McDonald S."/>
            <person name="McLean J."/>
            <person name="Mooney P."/>
            <person name="Moule S."/>
            <person name="Mungall K.L."/>
            <person name="Murphy L.D."/>
            <person name="Niblett D."/>
            <person name="Odell C."/>
            <person name="Oliver K."/>
            <person name="O'Neil S."/>
            <person name="Pearson D."/>
            <person name="Quail M.A."/>
            <person name="Rabbinowitsch E."/>
            <person name="Rutherford K.M."/>
            <person name="Rutter S."/>
            <person name="Saunders D."/>
            <person name="Seeger K."/>
            <person name="Sharp S."/>
            <person name="Skelton J."/>
            <person name="Simmonds M.N."/>
            <person name="Squares R."/>
            <person name="Squares S."/>
            <person name="Stevens K."/>
            <person name="Taylor K."/>
            <person name="Taylor R.G."/>
            <person name="Tivey A."/>
            <person name="Walsh S.V."/>
            <person name="Warren T."/>
            <person name="Whitehead S."/>
            <person name="Woodward J.R."/>
            <person name="Volckaert G."/>
            <person name="Aert R."/>
            <person name="Robben J."/>
            <person name="Grymonprez B."/>
            <person name="Weltjens I."/>
            <person name="Vanstreels E."/>
            <person name="Rieger M."/>
            <person name="Schaefer M."/>
            <person name="Mueller-Auer S."/>
            <person name="Gabel C."/>
            <person name="Fuchs M."/>
            <person name="Duesterhoeft A."/>
            <person name="Fritzc C."/>
            <person name="Holzer E."/>
            <person name="Moestl D."/>
            <person name="Hilbert H."/>
            <person name="Borzym K."/>
            <person name="Langer I."/>
            <person name="Beck A."/>
            <person name="Lehrach H."/>
            <person name="Reinhardt R."/>
            <person name="Pohl T.M."/>
            <person name="Eger P."/>
            <person name="Zimmermann W."/>
            <person name="Wedler H."/>
            <person name="Wambutt R."/>
            <person name="Purnelle B."/>
            <person name="Goffeau A."/>
            <person name="Cadieu E."/>
            <person name="Dreano S."/>
            <person name="Gloux S."/>
            <person name="Lelaure V."/>
            <person name="Mottier S."/>
            <person name="Galibert F."/>
            <person name="Aves S.J."/>
            <person name="Xiang Z."/>
            <person name="Hunt C."/>
            <person name="Moore K."/>
            <person name="Hurst S.M."/>
            <person name="Lucas M."/>
            <person name="Rochet M."/>
            <person name="Gaillardin C."/>
            <person name="Tallada V.A."/>
            <person name="Garzon A."/>
            <person name="Thode G."/>
            <person name="Daga R.R."/>
            <person name="Cruzado L."/>
            <person name="Jimenez J."/>
            <person name="Sanchez M."/>
            <person name="del Rey F."/>
            <person name="Benito J."/>
            <person name="Dominguez A."/>
            <person name="Revuelta J.L."/>
            <person name="Moreno S."/>
            <person name="Armstrong J."/>
            <person name="Forsburg S.L."/>
            <person name="Cerutti L."/>
            <person name="Lowe T."/>
            <person name="McCombie W.R."/>
            <person name="Paulsen I."/>
            <person name="Potashkin J."/>
            <person name="Shpakovski G.V."/>
            <person name="Ussery D."/>
            <person name="Barrell B.G."/>
            <person name="Nurse P."/>
        </authorList>
    </citation>
    <scope>NUCLEOTIDE SEQUENCE [LARGE SCALE GENOMIC DNA]</scope>
    <source>
        <strain>972 / ATCC 24843</strain>
    </source>
</reference>
<sequence>MNSDDNVEADASSNIIKDSPKIKEQENTSTVNESDVLATSTTASSGVKRKRLPNDLVGQLRDKIQENPNDISSWYALVEEYGSKGKHEELRETYEQMLRPFPYVPRVWVDYISSELAFNDFHAVELLFSRCLVKVLSVDLWTLYLSYIRRINPDGEGQSRSTITQAYEFVINTIGVDILSGPIWSEFVDFLRSGPANSTWEQQQKLDHVRRIYQRAITTPIHNIEKLWRDYDAFENSVNRATARKFVAEKSPVYMAARAAMRELSNLTEGLRVYDFTFERKYTKVERIAYSRWMNWIKWEQSDPLDLQHGTMLQNRIAYAFEQAMLYVPLCPQIWLDGFSYFLSISDEQRALQTIRRGMRYCPSNFVLHVRYAEHEEANNRTSEIRSTYESLIAALAREISQLDSKASSSSESSTDGNPQEKKLPEHLVKRKSRLVRQYSLAWCCLINAIRRTEGVKAARAIFTKARKAPYQSHEIYIASAMMEHHCSRDPVIASRIFELGMRHFGDVPAYVYKYLSYLIAINDETNARALFEKAIPRIAADEAKPIYQKWLDYESNYGDLNAAIALSQRMAVVYPQESTQAIFLSRYGLKDDAEEEERETKEAEKIRELSVRLNGGNGFPGHVHNNREDDEVSIASTSSKSNVEMEDTRLLPASLELANTQGASNPPTSALPTVPVPLPSIITEFLDELPAPQVITGPRIQPTKLIDHIIKSDIPFIRLRNANAHLKRARFN</sequence>
<gene>
    <name type="primary">rna14</name>
    <name type="ORF">SPAC6F12.17</name>
</gene>
<protein>
    <recommendedName>
        <fullName>mRNA 3'-end-processing protein rna14</fullName>
    </recommendedName>
</protein>
<dbReference type="EMBL" id="CU329670">
    <property type="protein sequence ID" value="CAB11100.1"/>
    <property type="molecule type" value="Genomic_DNA"/>
</dbReference>
<dbReference type="PIR" id="T11668">
    <property type="entry name" value="T11668"/>
</dbReference>
<dbReference type="RefSeq" id="NP_593303.1">
    <property type="nucleotide sequence ID" value="NM_001018733.2"/>
</dbReference>
<dbReference type="SMR" id="O14233"/>
<dbReference type="BioGRID" id="278097">
    <property type="interactions" value="13"/>
</dbReference>
<dbReference type="FunCoup" id="O14233">
    <property type="interactions" value="1061"/>
</dbReference>
<dbReference type="STRING" id="284812.O14233"/>
<dbReference type="iPTMnet" id="O14233"/>
<dbReference type="PaxDb" id="4896-SPAC6F12.17.1"/>
<dbReference type="EnsemblFungi" id="SPAC6F12.17.1">
    <property type="protein sequence ID" value="SPAC6F12.17.1:pep"/>
    <property type="gene ID" value="SPAC6F12.17"/>
</dbReference>
<dbReference type="GeneID" id="2541600"/>
<dbReference type="KEGG" id="spo:2541600"/>
<dbReference type="PomBase" id="SPAC6F12.17">
    <property type="gene designation" value="rna14"/>
</dbReference>
<dbReference type="VEuPathDB" id="FungiDB:SPAC6F12.17"/>
<dbReference type="eggNOG" id="KOG1914">
    <property type="taxonomic scope" value="Eukaryota"/>
</dbReference>
<dbReference type="HOGENOM" id="CLU_007630_0_1_1"/>
<dbReference type="InParanoid" id="O14233"/>
<dbReference type="OMA" id="PKRQYFK"/>
<dbReference type="PhylomeDB" id="O14233"/>
<dbReference type="PRO" id="PR:O14233"/>
<dbReference type="Proteomes" id="UP000002485">
    <property type="component" value="Chromosome I"/>
</dbReference>
<dbReference type="GO" id="GO:0000785">
    <property type="term" value="C:chromatin"/>
    <property type="evidence" value="ECO:0000314"/>
    <property type="project" value="PomBase"/>
</dbReference>
<dbReference type="GO" id="GO:0005737">
    <property type="term" value="C:cytoplasm"/>
    <property type="evidence" value="ECO:0007669"/>
    <property type="project" value="UniProtKB-SubCell"/>
</dbReference>
<dbReference type="GO" id="GO:0005848">
    <property type="term" value="C:mRNA cleavage stimulating factor complex"/>
    <property type="evidence" value="ECO:0000250"/>
    <property type="project" value="PomBase"/>
</dbReference>
<dbReference type="GO" id="GO:0005634">
    <property type="term" value="C:nucleus"/>
    <property type="evidence" value="ECO:0000314"/>
    <property type="project" value="PomBase"/>
</dbReference>
<dbReference type="GO" id="GO:0003729">
    <property type="term" value="F:mRNA binding"/>
    <property type="evidence" value="ECO:0000318"/>
    <property type="project" value="GO_Central"/>
</dbReference>
<dbReference type="GO" id="GO:0180010">
    <property type="term" value="P:co-transcriptional mRNA 3'-end processing, cleavage and polyadenylation pathway"/>
    <property type="evidence" value="ECO:0000315"/>
    <property type="project" value="PomBase"/>
</dbReference>
<dbReference type="GO" id="GO:0031123">
    <property type="term" value="P:RNA 3'-end processing"/>
    <property type="evidence" value="ECO:0000318"/>
    <property type="project" value="GO_Central"/>
</dbReference>
<dbReference type="Gene3D" id="1.25.40.1040">
    <property type="match status" value="1"/>
</dbReference>
<dbReference type="InterPro" id="IPR003107">
    <property type="entry name" value="HAT"/>
</dbReference>
<dbReference type="InterPro" id="IPR045243">
    <property type="entry name" value="Rna14-like"/>
</dbReference>
<dbReference type="InterPro" id="IPR008847">
    <property type="entry name" value="Suf"/>
</dbReference>
<dbReference type="InterPro" id="IPR011990">
    <property type="entry name" value="TPR-like_helical_dom_sf"/>
</dbReference>
<dbReference type="PANTHER" id="PTHR19980:SF0">
    <property type="entry name" value="CLEAVAGE STIMULATION FACTOR SUBUNIT 3"/>
    <property type="match status" value="1"/>
</dbReference>
<dbReference type="PANTHER" id="PTHR19980">
    <property type="entry name" value="RNA CLEAVAGE STIMULATION FACTOR"/>
    <property type="match status" value="1"/>
</dbReference>
<dbReference type="Pfam" id="PF05843">
    <property type="entry name" value="Suf"/>
    <property type="match status" value="1"/>
</dbReference>
<dbReference type="SMART" id="SM00386">
    <property type="entry name" value="HAT"/>
    <property type="match status" value="9"/>
</dbReference>
<dbReference type="SUPFAM" id="SSF48452">
    <property type="entry name" value="TPR-like"/>
    <property type="match status" value="2"/>
</dbReference>
<evidence type="ECO:0000250" key="1"/>
<evidence type="ECO:0000256" key="2">
    <source>
        <dbReference type="SAM" id="MobiDB-lite"/>
    </source>
</evidence>